<proteinExistence type="inferred from homology"/>
<dbReference type="EC" id="2.7.7.2" evidence="1"/>
<dbReference type="EMBL" id="CP001860">
    <property type="protein sequence ID" value="ADB60999.1"/>
    <property type="molecule type" value="Genomic_DNA"/>
</dbReference>
<dbReference type="RefSeq" id="WP_012943288.1">
    <property type="nucleotide sequence ID" value="NC_013743.1"/>
</dbReference>
<dbReference type="SMR" id="D2RTP8"/>
<dbReference type="STRING" id="543526.Htur_2116"/>
<dbReference type="GeneID" id="8742716"/>
<dbReference type="KEGG" id="htu:Htur_2116"/>
<dbReference type="eggNOG" id="arCOG01222">
    <property type="taxonomic scope" value="Archaea"/>
</dbReference>
<dbReference type="HOGENOM" id="CLU_034585_2_1_2"/>
<dbReference type="OrthoDB" id="1912at2157"/>
<dbReference type="UniPathway" id="UPA00277">
    <property type="reaction ID" value="UER00407"/>
</dbReference>
<dbReference type="Proteomes" id="UP000001903">
    <property type="component" value="Chromosome"/>
</dbReference>
<dbReference type="GO" id="GO:0005524">
    <property type="term" value="F:ATP binding"/>
    <property type="evidence" value="ECO:0007669"/>
    <property type="project" value="UniProtKB-UniRule"/>
</dbReference>
<dbReference type="GO" id="GO:0003919">
    <property type="term" value="F:FMN adenylyltransferase activity"/>
    <property type="evidence" value="ECO:0007669"/>
    <property type="project" value="UniProtKB-UniRule"/>
</dbReference>
<dbReference type="GO" id="GO:0006747">
    <property type="term" value="P:FAD biosynthetic process"/>
    <property type="evidence" value="ECO:0007669"/>
    <property type="project" value="UniProtKB-UniRule"/>
</dbReference>
<dbReference type="GO" id="GO:0046444">
    <property type="term" value="P:FMN metabolic process"/>
    <property type="evidence" value="ECO:0007669"/>
    <property type="project" value="UniProtKB-UniRule"/>
</dbReference>
<dbReference type="Gene3D" id="3.40.50.620">
    <property type="entry name" value="HUPs"/>
    <property type="match status" value="1"/>
</dbReference>
<dbReference type="HAMAP" id="MF_02115">
    <property type="entry name" value="FAD_synth_arch"/>
    <property type="match status" value="1"/>
</dbReference>
<dbReference type="InterPro" id="IPR050385">
    <property type="entry name" value="Archaeal_FAD_synthase"/>
</dbReference>
<dbReference type="InterPro" id="IPR004821">
    <property type="entry name" value="Cyt_trans-like"/>
</dbReference>
<dbReference type="InterPro" id="IPR024902">
    <property type="entry name" value="FAD_synth_RibL"/>
</dbReference>
<dbReference type="InterPro" id="IPR014729">
    <property type="entry name" value="Rossmann-like_a/b/a_fold"/>
</dbReference>
<dbReference type="NCBIfam" id="TIGR00125">
    <property type="entry name" value="cyt_tran_rel"/>
    <property type="match status" value="1"/>
</dbReference>
<dbReference type="PANTHER" id="PTHR43793">
    <property type="entry name" value="FAD SYNTHASE"/>
    <property type="match status" value="1"/>
</dbReference>
<dbReference type="PANTHER" id="PTHR43793:SF1">
    <property type="entry name" value="FAD SYNTHASE"/>
    <property type="match status" value="1"/>
</dbReference>
<dbReference type="Pfam" id="PF01467">
    <property type="entry name" value="CTP_transf_like"/>
    <property type="match status" value="1"/>
</dbReference>
<dbReference type="SUPFAM" id="SSF52374">
    <property type="entry name" value="Nucleotidylyl transferase"/>
    <property type="match status" value="1"/>
</dbReference>
<name>RIBL_HALTV</name>
<comment type="function">
    <text evidence="1">Catalyzes the transfer of the AMP portion of ATP to flavin mononucleotide (FMN) to produce flavin adenine dinucleotide (FAD) coenzyme.</text>
</comment>
<comment type="catalytic activity">
    <reaction evidence="1">
        <text>FMN + ATP + H(+) = FAD + diphosphate</text>
        <dbReference type="Rhea" id="RHEA:17237"/>
        <dbReference type="ChEBI" id="CHEBI:15378"/>
        <dbReference type="ChEBI" id="CHEBI:30616"/>
        <dbReference type="ChEBI" id="CHEBI:33019"/>
        <dbReference type="ChEBI" id="CHEBI:57692"/>
        <dbReference type="ChEBI" id="CHEBI:58210"/>
        <dbReference type="EC" id="2.7.7.2"/>
    </reaction>
</comment>
<comment type="cofactor">
    <cofactor evidence="1">
        <name>a divalent metal cation</name>
        <dbReference type="ChEBI" id="CHEBI:60240"/>
    </cofactor>
</comment>
<comment type="pathway">
    <text evidence="1">Cofactor biosynthesis; FAD biosynthesis; FAD from FMN: step 1/1.</text>
</comment>
<comment type="subunit">
    <text evidence="1">Homodimer.</text>
</comment>
<comment type="similarity">
    <text evidence="1">Belongs to the archaeal FAD synthase family.</text>
</comment>
<evidence type="ECO:0000255" key="1">
    <source>
        <dbReference type="HAMAP-Rule" id="MF_02115"/>
    </source>
</evidence>
<feature type="chain" id="PRO_0000406242" description="FAD synthase">
    <location>
        <begin position="1"/>
        <end position="143"/>
    </location>
</feature>
<feature type="binding site" evidence="1">
    <location>
        <begin position="10"/>
        <end position="11"/>
    </location>
    <ligand>
        <name>ATP</name>
        <dbReference type="ChEBI" id="CHEBI:30616"/>
    </ligand>
</feature>
<feature type="binding site" evidence="1">
    <location>
        <begin position="15"/>
        <end position="18"/>
    </location>
    <ligand>
        <name>ATP</name>
        <dbReference type="ChEBI" id="CHEBI:30616"/>
    </ligand>
</feature>
<feature type="binding site" evidence="1">
    <location>
        <position position="93"/>
    </location>
    <ligand>
        <name>ATP</name>
        <dbReference type="ChEBI" id="CHEBI:30616"/>
    </ligand>
</feature>
<reference key="1">
    <citation type="journal article" date="2010" name="Stand. Genomic Sci.">
        <title>Complete genome sequence of Haloterrigena turkmenica type strain (4k).</title>
        <authorList>
            <person name="Saunders E."/>
            <person name="Tindall B.J."/>
            <person name="Fahnrich R."/>
            <person name="Lapidus A."/>
            <person name="Copeland A."/>
            <person name="Del Rio T.G."/>
            <person name="Lucas S."/>
            <person name="Chen F."/>
            <person name="Tice H."/>
            <person name="Cheng J.F."/>
            <person name="Han C."/>
            <person name="Detter J.C."/>
            <person name="Bruce D."/>
            <person name="Goodwin L."/>
            <person name="Chain P."/>
            <person name="Pitluck S."/>
            <person name="Pati A."/>
            <person name="Ivanova N."/>
            <person name="Mavromatis K."/>
            <person name="Chen A."/>
            <person name="Palaniappan K."/>
            <person name="Land M."/>
            <person name="Hauser L."/>
            <person name="Chang Y.J."/>
            <person name="Jeffries C.D."/>
            <person name="Brettin T."/>
            <person name="Rohde M."/>
            <person name="Goker M."/>
            <person name="Bristow J."/>
            <person name="Eisen J.A."/>
            <person name="Markowitz V."/>
            <person name="Hugenholtz P."/>
            <person name="Klenk H.P."/>
            <person name="Kyrpides N.C."/>
        </authorList>
    </citation>
    <scope>NUCLEOTIDE SEQUENCE [LARGE SCALE GENOMIC DNA]</scope>
    <source>
        <strain>ATCC 51198 / DSM 5511 / JCM 9101 / NCIMB 13204 / VKM B-1734 / 4k</strain>
    </source>
</reference>
<keyword id="KW-0067">ATP-binding</keyword>
<keyword id="KW-0274">FAD</keyword>
<keyword id="KW-0285">Flavoprotein</keyword>
<keyword id="KW-0288">FMN</keyword>
<keyword id="KW-0547">Nucleotide-binding</keyword>
<keyword id="KW-0548">Nucleotidyltransferase</keyword>
<keyword id="KW-0808">Transferase</keyword>
<organism>
    <name type="scientific">Haloterrigena turkmenica (strain ATCC 51198 / DSM 5511 / JCM 9101 / NCIMB 13204 / VKM B-1734 / 4k)</name>
    <name type="common">Halococcus turkmenicus</name>
    <dbReference type="NCBI Taxonomy" id="543526"/>
    <lineage>
        <taxon>Archaea</taxon>
        <taxon>Methanobacteriati</taxon>
        <taxon>Methanobacteriota</taxon>
        <taxon>Stenosarchaea group</taxon>
        <taxon>Halobacteria</taxon>
        <taxon>Halobacteriales</taxon>
        <taxon>Natrialbaceae</taxon>
        <taxon>Haloterrigena</taxon>
    </lineage>
</organism>
<gene>
    <name evidence="1" type="primary">ribL</name>
    <name type="ordered locus">Htur_2116</name>
</gene>
<sequence length="143" mass="15939">MTRTVIAQGTFDILHPGHVHYLEEAAAMGDELLVIVARKSNVDHKEKPICPAAQRRDVVAALEAVDDAIVGHEEDIFAPIEAIDPDVIALGHDQHHDDDAIEAELERRGIDCTVERASAREPEREDEILSTRLIIDRILERRG</sequence>
<protein>
    <recommendedName>
        <fullName evidence="1">FAD synthase</fullName>
        <ecNumber evidence="1">2.7.7.2</ecNumber>
    </recommendedName>
    <alternativeName>
        <fullName evidence="1">FMN adenylyltransferase</fullName>
    </alternativeName>
    <alternativeName>
        <fullName evidence="1">Flavin adenine dinucleotide synthase</fullName>
    </alternativeName>
</protein>
<accession>D2RTP8</accession>